<feature type="chain" id="PRO_0000087492" description="PDZ domain-containing protein GIPC1">
    <location>
        <begin position="1"/>
        <end position="333"/>
    </location>
</feature>
<feature type="domain" description="PDZ" evidence="2">
    <location>
        <begin position="133"/>
        <end position="213"/>
    </location>
</feature>
<feature type="region of interest" description="Disordered" evidence="3">
    <location>
        <begin position="1"/>
        <end position="54"/>
    </location>
</feature>
<feature type="region of interest" description="Disordered" evidence="3">
    <location>
        <begin position="223"/>
        <end position="244"/>
    </location>
</feature>
<feature type="compositionally biased region" description="Basic residues" evidence="3">
    <location>
        <begin position="1"/>
        <end position="11"/>
    </location>
</feature>
<feature type="compositionally biased region" description="Gly residues" evidence="3">
    <location>
        <begin position="23"/>
        <end position="44"/>
    </location>
</feature>
<feature type="compositionally biased region" description="Gly residues" evidence="3">
    <location>
        <begin position="228"/>
        <end position="240"/>
    </location>
</feature>
<feature type="modified residue" description="Phosphoserine" evidence="10">
    <location>
        <position position="68"/>
    </location>
</feature>
<feature type="modified residue" description="Phosphoserine" evidence="10">
    <location>
        <position position="222"/>
    </location>
</feature>
<feature type="modified residue" description="Phosphoserine" evidence="9 10">
    <location>
        <position position="225"/>
    </location>
</feature>
<feature type="modified residue" description="Phosphoserine" evidence="9 10 11">
    <location>
        <position position="232"/>
    </location>
</feature>
<feature type="modified residue" description="Phosphothreonine" evidence="10">
    <location>
        <position position="242"/>
    </location>
</feature>
<feature type="modified residue" description="Phosphoserine" evidence="10">
    <location>
        <position position="247"/>
    </location>
</feature>
<feature type="splice variant" id="VSP_044296" description="In isoform 2." evidence="7">
    <location>
        <begin position="1"/>
        <end position="97"/>
    </location>
</feature>
<name>GIPC1_HUMAN</name>
<protein>
    <recommendedName>
        <fullName>PDZ domain-containing protein GIPC1</fullName>
    </recommendedName>
    <alternativeName>
        <fullName>GAIP C-terminus-interacting protein</fullName>
    </alternativeName>
    <alternativeName>
        <fullName>RGS-GAIP-interacting protein</fullName>
    </alternativeName>
    <alternativeName>
        <fullName>RGS19-interacting protein 1</fullName>
    </alternativeName>
    <alternativeName>
        <fullName>Synectin</fullName>
    </alternativeName>
    <alternativeName>
        <fullName>Tax interaction protein 2</fullName>
        <shortName>TIP-2</shortName>
    </alternativeName>
</protein>
<comment type="function">
    <text>May be involved in G protein-linked signaling.</text>
</comment>
<comment type="subunit">
    <text evidence="1 5 6">Interacts with GLUT1 (C-terminus), ACTN1, KIF1B, MYO6, PLEKHG5, SDC4/syndecan-4 and SEMA4C/semaphorin-4C (By similarity). Interacts with RGS19 C-terminus. Interacts with HTLV-I Tax through the PDZ domain.</text>
</comment>
<comment type="interaction">
    <interactant intactId="EBI-373132">
        <id>O14908</id>
    </interactant>
    <interactant intactId="EBI-821440">
        <id>Q9NZN5</id>
        <label>ARHGEF12</label>
    </interactant>
    <organismsDiffer>false</organismsDiffer>
    <experiments>8</experiments>
</comment>
<comment type="interaction">
    <interactant intactId="EBI-373132">
        <id>O14908</id>
    </interactant>
    <interactant intactId="EBI-350606">
        <id>Q9UM54</id>
        <label>MYO6</label>
    </interactant>
    <organismsDiffer>false</organismsDiffer>
    <experiments>2</experiments>
</comment>
<comment type="interaction">
    <interactant intactId="EBI-373132">
        <id>O14908</id>
    </interactant>
    <interactant intactId="EBI-4401947">
        <id>Q9HB19</id>
        <label>PLEKHA2</label>
    </interactant>
    <organismsDiffer>false</organismsDiffer>
    <experiments>3</experiments>
</comment>
<comment type="interaction">
    <interactant intactId="EBI-373132">
        <id>O14908</id>
    </interactant>
    <interactant intactId="EBI-1049513">
        <id>Q9P0V3</id>
        <label>SH3BP4</label>
    </interactant>
    <organismsDiffer>false</organismsDiffer>
    <experiments>4</experiments>
</comment>
<comment type="interaction">
    <interactant intactId="EBI-373132">
        <id>O14908</id>
    </interactant>
    <interactant intactId="EBI-2852679">
        <id>Q03167</id>
        <label>TGFBR3</label>
    </interactant>
    <organismsDiffer>false</organismsDiffer>
    <experiments>3</experiments>
</comment>
<comment type="interaction">
    <interactant intactId="EBI-373132">
        <id>O14908</id>
    </interactant>
    <interactant intactId="EBI-7900408">
        <id>P17643</id>
        <label>TYRP1</label>
    </interactant>
    <organismsDiffer>false</organismsDiffer>
    <experiments>3</experiments>
</comment>
<comment type="interaction">
    <interactant intactId="EBI-25913156">
        <id>O14908-2</id>
    </interactant>
    <interactant intactId="EBI-12811089">
        <id>Q8NC06-3</id>
        <label>ACBD4</label>
    </interactant>
    <organismsDiffer>false</organismsDiffer>
    <experiments>3</experiments>
</comment>
<comment type="interaction">
    <interactant intactId="EBI-25913156">
        <id>O14908-2</id>
    </interactant>
    <interactant intactId="EBI-2875816">
        <id>Q9NP61</id>
        <label>ARFGAP3</label>
    </interactant>
    <organismsDiffer>false</organismsDiffer>
    <experiments>3</experiments>
</comment>
<comment type="interaction">
    <interactant intactId="EBI-25913156">
        <id>O14908-2</id>
    </interactant>
    <interactant intactId="EBI-742750">
        <id>Q8TBE0</id>
        <label>BAHD1</label>
    </interactant>
    <organismsDiffer>false</organismsDiffer>
    <experiments>3</experiments>
</comment>
<comment type="interaction">
    <interactant intactId="EBI-25913156">
        <id>O14908-2</id>
    </interactant>
    <interactant intactId="EBI-2528238">
        <id>P20849</id>
        <label>COL9A1</label>
    </interactant>
    <organismsDiffer>false</organismsDiffer>
    <experiments>3</experiments>
</comment>
<comment type="interaction">
    <interactant intactId="EBI-25913156">
        <id>O14908-2</id>
    </interactant>
    <interactant intactId="EBI-12013806">
        <id>Q6NZ36-4</id>
        <label>FAAP20</label>
    </interactant>
    <organismsDiffer>false</organismsDiffer>
    <experiments>3</experiments>
</comment>
<comment type="interaction">
    <interactant intactId="EBI-25913156">
        <id>O14908-2</id>
    </interactant>
    <interactant intactId="EBI-11793142">
        <id>Q96GL9</id>
        <label>FAM163A</label>
    </interactant>
    <organismsDiffer>false</organismsDiffer>
    <experiments>3</experiments>
</comment>
<comment type="interaction">
    <interactant intactId="EBI-25913156">
        <id>O14908-2</id>
    </interactant>
    <interactant intactId="EBI-618189">
        <id>Q06547-2</id>
        <label>GABPB1</label>
    </interactant>
    <organismsDiffer>false</organismsDiffer>
    <experiments>3</experiments>
</comment>
<comment type="interaction">
    <interactant intactId="EBI-25913156">
        <id>O14908-2</id>
    </interactant>
    <interactant intactId="EBI-25887463">
        <id>Q7LGA3-3</id>
        <label>HS2ST1</label>
    </interactant>
    <organismsDiffer>false</organismsDiffer>
    <experiments>3</experiments>
</comment>
<comment type="interaction">
    <interactant intactId="EBI-25913156">
        <id>O14908-2</id>
    </interactant>
    <interactant intactId="EBI-17178971">
        <id>Q14005-2</id>
        <label>IL16</label>
    </interactant>
    <organismsDiffer>false</organismsDiffer>
    <experiments>3</experiments>
</comment>
<comment type="interaction">
    <interactant intactId="EBI-25913156">
        <id>O14908-2</id>
    </interactant>
    <interactant intactId="EBI-8472267">
        <id>P57682</id>
        <label>KLF3</label>
    </interactant>
    <organismsDiffer>false</organismsDiffer>
    <experiments>3</experiments>
</comment>
<comment type="interaction">
    <interactant intactId="EBI-25913156">
        <id>O14908-2</id>
    </interactant>
    <interactant intactId="EBI-714379">
        <id>Q9Y2M5</id>
        <label>KLHL20</label>
    </interactant>
    <organismsDiffer>false</organismsDiffer>
    <experiments>3</experiments>
</comment>
<comment type="interaction">
    <interactant intactId="EBI-25913156">
        <id>O14908-2</id>
    </interactant>
    <interactant intactId="EBI-298304">
        <id>Q15759</id>
        <label>MAPK11</label>
    </interactant>
    <organismsDiffer>false</organismsDiffer>
    <experiments>3</experiments>
</comment>
<comment type="interaction">
    <interactant intactId="EBI-25913156">
        <id>O14908-2</id>
    </interactant>
    <interactant intactId="EBI-357298">
        <id>Q9Y266</id>
        <label>NUDC</label>
    </interactant>
    <organismsDiffer>false</organismsDiffer>
    <experiments>3</experiments>
</comment>
<comment type="interaction">
    <interactant intactId="EBI-25913156">
        <id>O14908-2</id>
    </interactant>
    <interactant intactId="EBI-9091052">
        <id>Q6P4D5-2</id>
        <label>PABIR3</label>
    </interactant>
    <organismsDiffer>false</organismsDiffer>
    <experiments>3</experiments>
</comment>
<comment type="interaction">
    <interactant intactId="EBI-25913156">
        <id>O14908-2</id>
    </interactant>
    <interactant intactId="EBI-25839575">
        <id>Q8WZ73-3</id>
        <label>RFFL</label>
    </interactant>
    <organismsDiffer>false</organismsDiffer>
    <experiments>3</experiments>
</comment>
<comment type="interaction">
    <interactant intactId="EBI-25913156">
        <id>O14908-2</id>
    </interactant>
    <interactant intactId="EBI-2340642">
        <id>Q969K3</id>
        <label>RNF34</label>
    </interactant>
    <organismsDiffer>false</organismsDiffer>
    <experiments>3</experiments>
</comment>
<comment type="interaction">
    <interactant intactId="EBI-25913156">
        <id>O14908-2</id>
    </interactant>
    <interactant intactId="EBI-712405">
        <id>P48443</id>
        <label>RXRG</label>
    </interactant>
    <organismsDiffer>false</organismsDiffer>
    <experiments>3</experiments>
</comment>
<comment type="interaction">
    <interactant intactId="EBI-25913156">
        <id>O14908-2</id>
    </interactant>
    <interactant intactId="EBI-752324">
        <id>Q8N488</id>
        <label>RYBP</label>
    </interactant>
    <organismsDiffer>false</organismsDiffer>
    <experiments>3</experiments>
</comment>
<comment type="interaction">
    <interactant intactId="EBI-25913156">
        <id>O14908-2</id>
    </interactant>
    <interactant intactId="EBI-25837959">
        <id>Q9BY12-3</id>
        <label>SCAPER</label>
    </interactant>
    <organismsDiffer>false</organismsDiffer>
    <experiments>3</experiments>
</comment>
<comment type="interaction">
    <interactant intactId="EBI-25913156">
        <id>O14908-2</id>
    </interactant>
    <interactant intactId="EBI-10696955">
        <id>Q86SQ7-2</id>
        <label>SDCCAG8</label>
    </interactant>
    <organismsDiffer>false</organismsDiffer>
    <experiments>3</experiments>
</comment>
<comment type="interaction">
    <interactant intactId="EBI-25913156">
        <id>O14908-2</id>
    </interactant>
    <interactant intactId="EBI-10182463">
        <id>Q2NKQ1-4</id>
        <label>SGSM1</label>
    </interactant>
    <organismsDiffer>false</organismsDiffer>
    <experiments>3</experiments>
</comment>
<comment type="interaction">
    <interactant intactId="EBI-25913156">
        <id>O14908-2</id>
    </interactant>
    <interactant intactId="EBI-714135">
        <id>O75558</id>
        <label>STX11</label>
    </interactant>
    <organismsDiffer>false</organismsDiffer>
    <experiments>3</experiments>
</comment>
<comment type="interaction">
    <interactant intactId="EBI-25913156">
        <id>O14908-2</id>
    </interactant>
    <interactant intactId="EBI-954089">
        <id>O15273</id>
        <label>TCAP</label>
    </interactant>
    <organismsDiffer>false</organismsDiffer>
    <experiments>3</experiments>
</comment>
<comment type="interaction">
    <interactant intactId="EBI-25913156">
        <id>O14908-2</id>
    </interactant>
    <interactant intactId="EBI-2372529">
        <id>O60830</id>
        <label>TIMM17B</label>
    </interactant>
    <organismsDiffer>false</organismsDiffer>
    <experiments>3</experiments>
</comment>
<comment type="interaction">
    <interactant intactId="EBI-25913156">
        <id>O14908-2</id>
    </interactant>
    <interactant intactId="EBI-9088812">
        <id>Q5VYS8-5</id>
        <label>TUT7</label>
    </interactant>
    <organismsDiffer>false</organismsDiffer>
    <experiments>3</experiments>
</comment>
<comment type="interaction">
    <interactant intactId="EBI-25913156">
        <id>O14908-2</id>
    </interactant>
    <interactant intactId="EBI-12817837">
        <id>Q9H9P5-5</id>
        <label>UNKL</label>
    </interactant>
    <organismsDiffer>false</organismsDiffer>
    <experiments>3</experiments>
</comment>
<comment type="interaction">
    <interactant intactId="EBI-25913156">
        <id>O14908-2</id>
    </interactant>
    <interactant intactId="EBI-25830993">
        <id>Q96EF9</id>
        <label>ZHX1-C8orf76</label>
    </interactant>
    <organismsDiffer>false</organismsDiffer>
    <experiments>3</experiments>
</comment>
<comment type="interaction">
    <interactant intactId="EBI-25913156">
        <id>O14908-2</id>
    </interactant>
    <interactant intactId="EBI-8834821">
        <id>Q8WUU4</id>
        <label>ZNF296</label>
    </interactant>
    <organismsDiffer>false</organismsDiffer>
    <experiments>3</experiments>
</comment>
<comment type="interaction">
    <interactant intactId="EBI-25913156">
        <id>O14908-2</id>
    </interactant>
    <interactant intactId="EBI-12010736">
        <id>Q8N0Y2-2</id>
        <label>ZNF444</label>
    </interactant>
    <organismsDiffer>false</organismsDiffer>
    <experiments>3</experiments>
</comment>
<comment type="subcellular location">
    <subcellularLocation>
        <location evidence="4 6">Cytoplasm</location>
    </subcellularLocation>
    <subcellularLocation>
        <location evidence="6">Membrane</location>
        <topology>Peripheral membrane protein</topology>
    </subcellularLocation>
</comment>
<comment type="alternative products">
    <event type="alternative splicing"/>
    <isoform>
        <id>O14908-1</id>
        <name>1</name>
        <sequence type="displayed"/>
    </isoform>
    <isoform>
        <id>O14908-2</id>
        <name>2</name>
        <sequence type="described" ref="VSP_044296"/>
    </isoform>
</comment>
<comment type="tissue specificity">
    <text evidence="4 6">Widely expressed (PubMed:9770488). Expressed in skeletal muscle (at protein level) (PubMed:32413282).</text>
</comment>
<comment type="disease" evidence="4">
    <disease id="DI-05872">
        <name>Oculopharyngodistal myopathy 2</name>
        <acronym>OPDM2</acronym>
        <description>A form of oculopharyngodistal myopathy, a muscle disorder characterized by progressive ptosis, external ophthalmoplegia, and weakness of the masseter, facial, pharyngeal, and distal limb muscles. The myopathological features are presence of rimmed vacuoles in the muscle fibers and myopathic changes of differing severity. OPDM2 inheritance pattern is autosomal dominant.</description>
        <dbReference type="MIM" id="618940"/>
    </disease>
    <text evidence="4">The disease may be caused by variants affecting the gene represented in this entry. GGC repeat expansions in the 5'-UTR ranging from 73 to 164 were reported in patients, compared with a normal range from 12 to 32 in unaffected individuals. Patient skeletal muscle showed similar protein levels to those of unaffected individuals.</text>
</comment>
<comment type="similarity">
    <text evidence="8">Belongs to the GIPC family.</text>
</comment>
<evidence type="ECO:0000250" key="1"/>
<evidence type="ECO:0000255" key="2">
    <source>
        <dbReference type="PROSITE-ProRule" id="PRU00143"/>
    </source>
</evidence>
<evidence type="ECO:0000256" key="3">
    <source>
        <dbReference type="SAM" id="MobiDB-lite"/>
    </source>
</evidence>
<evidence type="ECO:0000269" key="4">
    <source>
    </source>
</evidence>
<evidence type="ECO:0000269" key="5">
    <source>
    </source>
</evidence>
<evidence type="ECO:0000269" key="6">
    <source>
    </source>
</evidence>
<evidence type="ECO:0000303" key="7">
    <source>
    </source>
</evidence>
<evidence type="ECO:0000305" key="8"/>
<evidence type="ECO:0007744" key="9">
    <source>
    </source>
</evidence>
<evidence type="ECO:0007744" key="10">
    <source>
    </source>
</evidence>
<evidence type="ECO:0007744" key="11">
    <source>
    </source>
</evidence>
<proteinExistence type="evidence at protein level"/>
<accession>O14908</accession>
<accession>A8K4I3</accession>
<accession>A8MZG3</accession>
<accession>Q9BTC9</accession>
<organism>
    <name type="scientific">Homo sapiens</name>
    <name type="common">Human</name>
    <dbReference type="NCBI Taxonomy" id="9606"/>
    <lineage>
        <taxon>Eukaryota</taxon>
        <taxon>Metazoa</taxon>
        <taxon>Chordata</taxon>
        <taxon>Craniata</taxon>
        <taxon>Vertebrata</taxon>
        <taxon>Euteleostomi</taxon>
        <taxon>Mammalia</taxon>
        <taxon>Eutheria</taxon>
        <taxon>Euarchontoglires</taxon>
        <taxon>Primates</taxon>
        <taxon>Haplorrhini</taxon>
        <taxon>Catarrhini</taxon>
        <taxon>Hominidae</taxon>
        <taxon>Homo</taxon>
    </lineage>
</organism>
<keyword id="KW-0025">Alternative splicing</keyword>
<keyword id="KW-0912">Congenital muscular dystrophy</keyword>
<keyword id="KW-0963">Cytoplasm</keyword>
<keyword id="KW-1215">Dystroglycanopathy</keyword>
<keyword id="KW-0472">Membrane</keyword>
<keyword id="KW-0597">Phosphoprotein</keyword>
<keyword id="KW-1267">Proteomics identification</keyword>
<keyword id="KW-1185">Reference proteome</keyword>
<dbReference type="EMBL" id="AF089816">
    <property type="protein sequence ID" value="AAC67548.1"/>
    <property type="molecule type" value="mRNA"/>
</dbReference>
<dbReference type="EMBL" id="AK290948">
    <property type="protein sequence ID" value="BAF83637.1"/>
    <property type="molecule type" value="mRNA"/>
</dbReference>
<dbReference type="EMBL" id="AC008569">
    <property type="status" value="NOT_ANNOTATED_CDS"/>
    <property type="molecule type" value="Genomic_DNA"/>
</dbReference>
<dbReference type="EMBL" id="AC012318">
    <property type="status" value="NOT_ANNOTATED_CDS"/>
    <property type="molecule type" value="Genomic_DNA"/>
</dbReference>
<dbReference type="EMBL" id="CH471106">
    <property type="protein sequence ID" value="EAW84423.1"/>
    <property type="molecule type" value="Genomic_DNA"/>
</dbReference>
<dbReference type="EMBL" id="CH471106">
    <property type="protein sequence ID" value="EAW84425.1"/>
    <property type="molecule type" value="Genomic_DNA"/>
</dbReference>
<dbReference type="EMBL" id="BC000410">
    <property type="protein sequence ID" value="AAH00410.1"/>
    <property type="molecule type" value="mRNA"/>
</dbReference>
<dbReference type="EMBL" id="BC004226">
    <property type="protein sequence ID" value="AAH04226.2"/>
    <property type="molecule type" value="mRNA"/>
</dbReference>
<dbReference type="EMBL" id="BC012810">
    <property type="protein sequence ID" value="AAH12810.1"/>
    <property type="molecule type" value="mRNA"/>
</dbReference>
<dbReference type="EMBL" id="BC016169">
    <property type="protein sequence ID" value="AAH16169.1"/>
    <property type="molecule type" value="mRNA"/>
</dbReference>
<dbReference type="EMBL" id="AF028824">
    <property type="protein sequence ID" value="AAB84249.1"/>
    <property type="molecule type" value="mRNA"/>
</dbReference>
<dbReference type="CCDS" id="CCDS12310.1">
    <molecule id="O14908-1"/>
</dbReference>
<dbReference type="CCDS" id="CCDS12311.1">
    <molecule id="O14908-2"/>
</dbReference>
<dbReference type="RefSeq" id="NP_005707.1">
    <molecule id="O14908-1"/>
    <property type="nucleotide sequence ID" value="NM_005716.4"/>
</dbReference>
<dbReference type="RefSeq" id="NP_974197.1">
    <molecule id="O14908-1"/>
    <property type="nucleotide sequence ID" value="NM_202468.3"/>
</dbReference>
<dbReference type="RefSeq" id="NP_974198.1">
    <molecule id="O14908-2"/>
    <property type="nucleotide sequence ID" value="NM_202469.3"/>
</dbReference>
<dbReference type="RefSeq" id="NP_974199.1">
    <molecule id="O14908-1"/>
    <property type="nucleotide sequence ID" value="NM_202470.3"/>
</dbReference>
<dbReference type="RefSeq" id="NP_974223.1">
    <molecule id="O14908-2"/>
    <property type="nucleotide sequence ID" value="NM_202494.3"/>
</dbReference>
<dbReference type="RefSeq" id="XP_016881636.1">
    <molecule id="O14908-1"/>
    <property type="nucleotide sequence ID" value="XM_017026147.2"/>
</dbReference>
<dbReference type="RefSeq" id="XP_016881637.1">
    <molecule id="O14908-2"/>
    <property type="nucleotide sequence ID" value="XM_017026148.3"/>
</dbReference>
<dbReference type="RefSeq" id="XP_054175518.1">
    <molecule id="O14908-2"/>
    <property type="nucleotide sequence ID" value="XM_054319543.1"/>
</dbReference>
<dbReference type="SMR" id="O14908"/>
<dbReference type="BioGRID" id="115978">
    <property type="interactions" value="115"/>
</dbReference>
<dbReference type="ComplexPortal" id="CPX-7724">
    <property type="entry name" value="LIFT actin modulation complex"/>
</dbReference>
<dbReference type="CORUM" id="O14908"/>
<dbReference type="DIP" id="DIP-31142N"/>
<dbReference type="FunCoup" id="O14908">
    <property type="interactions" value="1709"/>
</dbReference>
<dbReference type="IntAct" id="O14908">
    <property type="interactions" value="82"/>
</dbReference>
<dbReference type="MINT" id="O14908"/>
<dbReference type="STRING" id="9606.ENSP00000376753"/>
<dbReference type="GlyGen" id="O14908">
    <property type="glycosylation" value="1 site, 1 O-linked glycan (1 site)"/>
</dbReference>
<dbReference type="iPTMnet" id="O14908"/>
<dbReference type="PhosphoSitePlus" id="O14908"/>
<dbReference type="SwissPalm" id="O14908"/>
<dbReference type="BioMuta" id="GIPC1"/>
<dbReference type="jPOST" id="O14908"/>
<dbReference type="MassIVE" id="O14908"/>
<dbReference type="PaxDb" id="9606-ENSP00000376753"/>
<dbReference type="PeptideAtlas" id="O14908"/>
<dbReference type="PRIDE" id="O14908"/>
<dbReference type="ProteomicsDB" id="1863"/>
<dbReference type="ProteomicsDB" id="48292">
    <molecule id="O14908-1"/>
</dbReference>
<dbReference type="Pumba" id="O14908"/>
<dbReference type="Antibodypedia" id="13703">
    <property type="antibodies" value="306 antibodies from 33 providers"/>
</dbReference>
<dbReference type="DNASU" id="10755"/>
<dbReference type="Ensembl" id="ENST00000345425.6">
    <molecule id="O14908-1"/>
    <property type="protein sequence ID" value="ENSP00000340698.1"/>
    <property type="gene ID" value="ENSG00000123159.16"/>
</dbReference>
<dbReference type="Ensembl" id="ENST00000393028.5">
    <molecule id="O14908-2"/>
    <property type="protein sequence ID" value="ENSP00000376748.1"/>
    <property type="gene ID" value="ENSG00000123159.16"/>
</dbReference>
<dbReference type="Ensembl" id="ENST00000393033.9">
    <molecule id="O14908-1"/>
    <property type="protein sequence ID" value="ENSP00000376753.3"/>
    <property type="gene ID" value="ENSG00000123159.16"/>
</dbReference>
<dbReference type="Ensembl" id="ENST00000586027.5">
    <molecule id="O14908-1"/>
    <property type="protein sequence ID" value="ENSP00000466747.1"/>
    <property type="gene ID" value="ENSG00000123159.16"/>
</dbReference>
<dbReference type="Ensembl" id="ENST00000591349.5">
    <molecule id="O14908-2"/>
    <property type="protein sequence ID" value="ENSP00000467077.1"/>
    <property type="gene ID" value="ENSG00000123159.16"/>
</dbReference>
<dbReference type="GeneID" id="10755"/>
<dbReference type="KEGG" id="hsa:10755"/>
<dbReference type="MANE-Select" id="ENST00000393033.9">
    <property type="protein sequence ID" value="ENSP00000376753.3"/>
    <property type="RefSeq nucleotide sequence ID" value="NM_005716.4"/>
    <property type="RefSeq protein sequence ID" value="NP_005707.1"/>
</dbReference>
<dbReference type="UCSC" id="uc002myt.5">
    <molecule id="O14908-1"/>
    <property type="organism name" value="human"/>
</dbReference>
<dbReference type="AGR" id="HGNC:1226"/>
<dbReference type="CTD" id="10755"/>
<dbReference type="DisGeNET" id="10755"/>
<dbReference type="GeneCards" id="GIPC1"/>
<dbReference type="HGNC" id="HGNC:1226">
    <property type="gene designation" value="GIPC1"/>
</dbReference>
<dbReference type="HPA" id="ENSG00000123159">
    <property type="expression patterns" value="Tissue enhanced (esophagus)"/>
</dbReference>
<dbReference type="MalaCards" id="GIPC1"/>
<dbReference type="MIM" id="605072">
    <property type="type" value="gene"/>
</dbReference>
<dbReference type="MIM" id="618940">
    <property type="type" value="phenotype"/>
</dbReference>
<dbReference type="neXtProt" id="NX_O14908"/>
<dbReference type="OpenTargets" id="ENSG00000123159"/>
<dbReference type="Orphanet" id="98897">
    <property type="disease" value="Oculopharyngodistal myopathy"/>
</dbReference>
<dbReference type="PharmGKB" id="PA34371"/>
<dbReference type="VEuPathDB" id="HostDB:ENSG00000123159"/>
<dbReference type="eggNOG" id="KOG3938">
    <property type="taxonomic scope" value="Eukaryota"/>
</dbReference>
<dbReference type="GeneTree" id="ENSGT00390000003420"/>
<dbReference type="HOGENOM" id="CLU_044527_1_0_1"/>
<dbReference type="InParanoid" id="O14908"/>
<dbReference type="OMA" id="GFANIGP"/>
<dbReference type="OrthoDB" id="6509831at2759"/>
<dbReference type="PAN-GO" id="O14908">
    <property type="GO annotations" value="0 GO annotations based on evolutionary models"/>
</dbReference>
<dbReference type="PhylomeDB" id="O14908"/>
<dbReference type="TreeFam" id="TF313878"/>
<dbReference type="PathwayCommons" id="O14908"/>
<dbReference type="Reactome" id="R-HSA-190370">
    <property type="pathway name" value="FGFR1b ligand binding and activation"/>
</dbReference>
<dbReference type="Reactome" id="R-HSA-190373">
    <property type="pathway name" value="FGFR1c ligand binding and activation"/>
</dbReference>
<dbReference type="Reactome" id="R-HSA-9839389">
    <property type="pathway name" value="TGFBR3 regulates TGF-beta signaling"/>
</dbReference>
<dbReference type="Reactome" id="R-HSA-9839397">
    <property type="pathway name" value="TGFBR3 regulates FGF2 signaling"/>
</dbReference>
<dbReference type="SignaLink" id="O14908"/>
<dbReference type="BioGRID-ORCS" id="10755">
    <property type="hits" value="16 hits in 1153 CRISPR screens"/>
</dbReference>
<dbReference type="ChiTaRS" id="GIPC1">
    <property type="organism name" value="human"/>
</dbReference>
<dbReference type="GeneWiki" id="GIPC1"/>
<dbReference type="GenomeRNAi" id="10755"/>
<dbReference type="Pharos" id="O14908">
    <property type="development level" value="Tbio"/>
</dbReference>
<dbReference type="PRO" id="PR:O14908"/>
<dbReference type="Proteomes" id="UP000005640">
    <property type="component" value="Chromosome 19"/>
</dbReference>
<dbReference type="RNAct" id="O14908">
    <property type="molecule type" value="protein"/>
</dbReference>
<dbReference type="Bgee" id="ENSG00000123159">
    <property type="expression patterns" value="Expressed in lower esophagus mucosa and 211 other cell types or tissues"/>
</dbReference>
<dbReference type="ExpressionAtlas" id="O14908">
    <property type="expression patterns" value="baseline and differential"/>
</dbReference>
<dbReference type="GO" id="GO:0005938">
    <property type="term" value="C:cell cortex"/>
    <property type="evidence" value="ECO:0000314"/>
    <property type="project" value="UniProtKB"/>
</dbReference>
<dbReference type="GO" id="GO:0005737">
    <property type="term" value="C:cytoplasm"/>
    <property type="evidence" value="ECO:0000250"/>
    <property type="project" value="BHF-UCL"/>
</dbReference>
<dbReference type="GO" id="GO:0031410">
    <property type="term" value="C:cytoplasmic vesicle"/>
    <property type="evidence" value="ECO:0000314"/>
    <property type="project" value="UniProtKB"/>
</dbReference>
<dbReference type="GO" id="GO:0005829">
    <property type="term" value="C:cytosol"/>
    <property type="evidence" value="ECO:0000250"/>
    <property type="project" value="UniProtKB"/>
</dbReference>
<dbReference type="GO" id="GO:0043198">
    <property type="term" value="C:dendritic shaft"/>
    <property type="evidence" value="ECO:0000250"/>
    <property type="project" value="BHF-UCL"/>
</dbReference>
<dbReference type="GO" id="GO:0043197">
    <property type="term" value="C:dendritic spine"/>
    <property type="evidence" value="ECO:0000250"/>
    <property type="project" value="BHF-UCL"/>
</dbReference>
<dbReference type="GO" id="GO:0070062">
    <property type="term" value="C:extracellular exosome"/>
    <property type="evidence" value="ECO:0007005"/>
    <property type="project" value="UniProtKB"/>
</dbReference>
<dbReference type="GO" id="GO:0098978">
    <property type="term" value="C:glutamatergic synapse"/>
    <property type="evidence" value="ECO:0007669"/>
    <property type="project" value="Ensembl"/>
</dbReference>
<dbReference type="GO" id="GO:0016020">
    <property type="term" value="C:membrane"/>
    <property type="evidence" value="ECO:0007005"/>
    <property type="project" value="UniProtKB"/>
</dbReference>
<dbReference type="GO" id="GO:0098685">
    <property type="term" value="C:Schaffer collateral - CA1 synapse"/>
    <property type="evidence" value="ECO:0007669"/>
    <property type="project" value="Ensembl"/>
</dbReference>
<dbReference type="GO" id="GO:0008021">
    <property type="term" value="C:synaptic vesicle"/>
    <property type="evidence" value="ECO:0000250"/>
    <property type="project" value="BHF-UCL"/>
</dbReference>
<dbReference type="GO" id="GO:0012506">
    <property type="term" value="C:vesicle membrane"/>
    <property type="evidence" value="ECO:0000250"/>
    <property type="project" value="BHF-UCL"/>
</dbReference>
<dbReference type="GO" id="GO:0003779">
    <property type="term" value="F:actin binding"/>
    <property type="evidence" value="ECO:0000250"/>
    <property type="project" value="BHF-UCL"/>
</dbReference>
<dbReference type="GO" id="GO:0045296">
    <property type="term" value="F:cadherin binding"/>
    <property type="evidence" value="ECO:0007005"/>
    <property type="project" value="BHF-UCL"/>
</dbReference>
<dbReference type="GO" id="GO:0042802">
    <property type="term" value="F:identical protein binding"/>
    <property type="evidence" value="ECO:0000250"/>
    <property type="project" value="BHF-UCL"/>
</dbReference>
<dbReference type="GO" id="GO:0017022">
    <property type="term" value="F:myosin binding"/>
    <property type="evidence" value="ECO:0000250"/>
    <property type="project" value="BHF-UCL"/>
</dbReference>
<dbReference type="GO" id="GO:0005102">
    <property type="term" value="F:signaling receptor binding"/>
    <property type="evidence" value="ECO:0000353"/>
    <property type="project" value="UniProtKB"/>
</dbReference>
<dbReference type="GO" id="GO:0098761">
    <property type="term" value="P:cellular response to interleukin-7"/>
    <property type="evidence" value="ECO:0007669"/>
    <property type="project" value="Ensembl"/>
</dbReference>
<dbReference type="GO" id="GO:0007268">
    <property type="term" value="P:chemical synaptic transmission"/>
    <property type="evidence" value="ECO:0000250"/>
    <property type="project" value="BHF-UCL"/>
</dbReference>
<dbReference type="GO" id="GO:0043542">
    <property type="term" value="P:endothelial cell migration"/>
    <property type="evidence" value="ECO:0000250"/>
    <property type="project" value="BHF-UCL"/>
</dbReference>
<dbReference type="GO" id="GO:0007186">
    <property type="term" value="P:G protein-coupled receptor signaling pathway"/>
    <property type="evidence" value="ECO:0000303"/>
    <property type="project" value="UniProtKB"/>
</dbReference>
<dbReference type="GO" id="GO:0014047">
    <property type="term" value="P:glutamate secretion"/>
    <property type="evidence" value="ECO:0000250"/>
    <property type="project" value="BHF-UCL"/>
</dbReference>
<dbReference type="GO" id="GO:0032435">
    <property type="term" value="P:negative regulation of proteasomal ubiquitin-dependent protein catabolic process"/>
    <property type="evidence" value="ECO:0000250"/>
    <property type="project" value="BHF-UCL"/>
</dbReference>
<dbReference type="GO" id="GO:0032467">
    <property type="term" value="P:positive regulation of cytokinesis"/>
    <property type="evidence" value="ECO:0000315"/>
    <property type="project" value="UniProtKB"/>
</dbReference>
<dbReference type="GO" id="GO:0048023">
    <property type="term" value="P:positive regulation of melanin biosynthetic process"/>
    <property type="evidence" value="ECO:0000315"/>
    <property type="project" value="UniProtKB"/>
</dbReference>
<dbReference type="GO" id="GO:0030511">
    <property type="term" value="P:positive regulation of transforming growth factor beta receptor signaling pathway"/>
    <property type="evidence" value="ECO:0000250"/>
    <property type="project" value="BHF-UCL"/>
</dbReference>
<dbReference type="GO" id="GO:0099171">
    <property type="term" value="P:presynaptic modulation of chemical synaptic transmission"/>
    <property type="evidence" value="ECO:0007669"/>
    <property type="project" value="Ensembl"/>
</dbReference>
<dbReference type="GO" id="GO:0006605">
    <property type="term" value="P:protein targeting"/>
    <property type="evidence" value="ECO:0000250"/>
    <property type="project" value="BHF-UCL"/>
</dbReference>
<dbReference type="GO" id="GO:0031647">
    <property type="term" value="P:regulation of protein stability"/>
    <property type="evidence" value="ECO:0000250"/>
    <property type="project" value="BHF-UCL"/>
</dbReference>
<dbReference type="GO" id="GO:0048167">
    <property type="term" value="P:regulation of synaptic plasticity"/>
    <property type="evidence" value="ECO:0000250"/>
    <property type="project" value="BHF-UCL"/>
</dbReference>
<dbReference type="CDD" id="cd21180">
    <property type="entry name" value="GH2_GIPC"/>
    <property type="match status" value="1"/>
</dbReference>
<dbReference type="CDD" id="cd23077">
    <property type="entry name" value="PDZ_GIPC1"/>
    <property type="match status" value="1"/>
</dbReference>
<dbReference type="FunFam" id="2.30.42.10:FF:000097">
    <property type="entry name" value="PDZ domain-containing protein GIPC1 isoform 1"/>
    <property type="match status" value="1"/>
</dbReference>
<dbReference type="Gene3D" id="2.30.42.10">
    <property type="match status" value="1"/>
</dbReference>
<dbReference type="InterPro" id="IPR055349">
    <property type="entry name" value="GH2_GIPC"/>
</dbReference>
<dbReference type="InterPro" id="IPR056814">
    <property type="entry name" value="GIPC1-3_GH1"/>
</dbReference>
<dbReference type="InterPro" id="IPR017379">
    <property type="entry name" value="GIPC1/2/3"/>
</dbReference>
<dbReference type="InterPro" id="IPR001478">
    <property type="entry name" value="PDZ"/>
</dbReference>
<dbReference type="InterPro" id="IPR036034">
    <property type="entry name" value="PDZ_sf"/>
</dbReference>
<dbReference type="PANTHER" id="PTHR12259:SF4">
    <property type="entry name" value="PDZ DOMAIN-CONTAINING PROTEIN GIPC1"/>
    <property type="match status" value="1"/>
</dbReference>
<dbReference type="PANTHER" id="PTHR12259">
    <property type="entry name" value="RGS-GAIP INTERACTING PROTEIN GIPC"/>
    <property type="match status" value="1"/>
</dbReference>
<dbReference type="Pfam" id="PF25083">
    <property type="entry name" value="GIPC1_GH1"/>
    <property type="match status" value="1"/>
</dbReference>
<dbReference type="Pfam" id="PF25082">
    <property type="entry name" value="GIPC1_GH2"/>
    <property type="match status" value="1"/>
</dbReference>
<dbReference type="Pfam" id="PF00595">
    <property type="entry name" value="PDZ"/>
    <property type="match status" value="1"/>
</dbReference>
<dbReference type="PIRSF" id="PIRSF038083">
    <property type="entry name" value="UCP038083_GIPC"/>
    <property type="match status" value="1"/>
</dbReference>
<dbReference type="SMART" id="SM00228">
    <property type="entry name" value="PDZ"/>
    <property type="match status" value="1"/>
</dbReference>
<dbReference type="SUPFAM" id="SSF50156">
    <property type="entry name" value="PDZ domain-like"/>
    <property type="match status" value="1"/>
</dbReference>
<dbReference type="PROSITE" id="PS50106">
    <property type="entry name" value="PDZ"/>
    <property type="match status" value="1"/>
</dbReference>
<sequence>MPLGLGRRKKAPPLVENEEAEPGRGGLGVGEPGPLGGGGSGGPQMGLPPPPPALRPRLVFHTQLAHGSPTGRIEGFTNVKELYGKIAEAFRLPTAEVMFCTLNTHKVDMDKLLGGQIGLEDFIFAHVKGQRKEVEVFKSEDALGLTITDNGAGYAFIKRIKEGSVIDHIHLISVGDMIEAINGQSLLGCRHYEVARLLKELPRGRTFTLKLTEPRKAFDMISQRSAGGRPGSGPQLGTGRGTLRLRSRGPATVEDLPSAFEEKAIEKVDDLLESYMGIRDTELAATMVELGKDKRNPDELAEALDERLGDFAFPDEFVFDVWGAIGDAKVGRY</sequence>
<gene>
    <name type="primary">GIPC1</name>
    <name type="synonym">C19orf3</name>
    <name type="synonym">GIPC</name>
    <name type="synonym">RGS19IP1</name>
</gene>
<reference key="1">
    <citation type="journal article" date="1998" name="Proc. Natl. Acad. Sci. U.S.A.">
        <title>GIPC, a PDZ domain containing protein, interacts specifically with the C-terminus of RGS-GAIP.</title>
        <authorList>
            <person name="De Vries L."/>
            <person name="Lou X."/>
            <person name="Zhao G."/>
            <person name="Zheng B."/>
            <person name="Farquhar M.G."/>
        </authorList>
    </citation>
    <scope>NUCLEOTIDE SEQUENCE [MRNA] (ISOFORM 1)</scope>
    <scope>INTERACTION WITH RGS19</scope>
    <scope>SUBCELLULAR LOCATION</scope>
    <scope>TISSUE SPECIFICITY</scope>
    <source>
        <tissue>Pituitary</tissue>
    </source>
</reference>
<reference key="2">
    <citation type="journal article" date="2004" name="Nat. Genet.">
        <title>Complete sequencing and characterization of 21,243 full-length human cDNAs.</title>
        <authorList>
            <person name="Ota T."/>
            <person name="Suzuki Y."/>
            <person name="Nishikawa T."/>
            <person name="Otsuki T."/>
            <person name="Sugiyama T."/>
            <person name="Irie R."/>
            <person name="Wakamatsu A."/>
            <person name="Hayashi K."/>
            <person name="Sato H."/>
            <person name="Nagai K."/>
            <person name="Kimura K."/>
            <person name="Makita H."/>
            <person name="Sekine M."/>
            <person name="Obayashi M."/>
            <person name="Nishi T."/>
            <person name="Shibahara T."/>
            <person name="Tanaka T."/>
            <person name="Ishii S."/>
            <person name="Yamamoto J."/>
            <person name="Saito K."/>
            <person name="Kawai Y."/>
            <person name="Isono Y."/>
            <person name="Nakamura Y."/>
            <person name="Nagahari K."/>
            <person name="Murakami K."/>
            <person name="Yasuda T."/>
            <person name="Iwayanagi T."/>
            <person name="Wagatsuma M."/>
            <person name="Shiratori A."/>
            <person name="Sudo H."/>
            <person name="Hosoiri T."/>
            <person name="Kaku Y."/>
            <person name="Kodaira H."/>
            <person name="Kondo H."/>
            <person name="Sugawara M."/>
            <person name="Takahashi M."/>
            <person name="Kanda K."/>
            <person name="Yokoi T."/>
            <person name="Furuya T."/>
            <person name="Kikkawa E."/>
            <person name="Omura Y."/>
            <person name="Abe K."/>
            <person name="Kamihara K."/>
            <person name="Katsuta N."/>
            <person name="Sato K."/>
            <person name="Tanikawa M."/>
            <person name="Yamazaki M."/>
            <person name="Ninomiya K."/>
            <person name="Ishibashi T."/>
            <person name="Yamashita H."/>
            <person name="Murakawa K."/>
            <person name="Fujimori K."/>
            <person name="Tanai H."/>
            <person name="Kimata M."/>
            <person name="Watanabe M."/>
            <person name="Hiraoka S."/>
            <person name="Chiba Y."/>
            <person name="Ishida S."/>
            <person name="Ono Y."/>
            <person name="Takiguchi S."/>
            <person name="Watanabe S."/>
            <person name="Yosida M."/>
            <person name="Hotuta T."/>
            <person name="Kusano J."/>
            <person name="Kanehori K."/>
            <person name="Takahashi-Fujii A."/>
            <person name="Hara H."/>
            <person name="Tanase T.-O."/>
            <person name="Nomura Y."/>
            <person name="Togiya S."/>
            <person name="Komai F."/>
            <person name="Hara R."/>
            <person name="Takeuchi K."/>
            <person name="Arita M."/>
            <person name="Imose N."/>
            <person name="Musashino K."/>
            <person name="Yuuki H."/>
            <person name="Oshima A."/>
            <person name="Sasaki N."/>
            <person name="Aotsuka S."/>
            <person name="Yoshikawa Y."/>
            <person name="Matsunawa H."/>
            <person name="Ichihara T."/>
            <person name="Shiohata N."/>
            <person name="Sano S."/>
            <person name="Moriya S."/>
            <person name="Momiyama H."/>
            <person name="Satoh N."/>
            <person name="Takami S."/>
            <person name="Terashima Y."/>
            <person name="Suzuki O."/>
            <person name="Nakagawa S."/>
            <person name="Senoh A."/>
            <person name="Mizoguchi H."/>
            <person name="Goto Y."/>
            <person name="Shimizu F."/>
            <person name="Wakebe H."/>
            <person name="Hishigaki H."/>
            <person name="Watanabe T."/>
            <person name="Sugiyama A."/>
            <person name="Takemoto M."/>
            <person name="Kawakami B."/>
            <person name="Yamazaki M."/>
            <person name="Watanabe K."/>
            <person name="Kumagai A."/>
            <person name="Itakura S."/>
            <person name="Fukuzumi Y."/>
            <person name="Fujimori Y."/>
            <person name="Komiyama M."/>
            <person name="Tashiro H."/>
            <person name="Tanigami A."/>
            <person name="Fujiwara T."/>
            <person name="Ono T."/>
            <person name="Yamada K."/>
            <person name="Fujii Y."/>
            <person name="Ozaki K."/>
            <person name="Hirao M."/>
            <person name="Ohmori Y."/>
            <person name="Kawabata A."/>
            <person name="Hikiji T."/>
            <person name="Kobatake N."/>
            <person name="Inagaki H."/>
            <person name="Ikema Y."/>
            <person name="Okamoto S."/>
            <person name="Okitani R."/>
            <person name="Kawakami T."/>
            <person name="Noguchi S."/>
            <person name="Itoh T."/>
            <person name="Shigeta K."/>
            <person name="Senba T."/>
            <person name="Matsumura K."/>
            <person name="Nakajima Y."/>
            <person name="Mizuno T."/>
            <person name="Morinaga M."/>
            <person name="Sasaki M."/>
            <person name="Togashi T."/>
            <person name="Oyama M."/>
            <person name="Hata H."/>
            <person name="Watanabe M."/>
            <person name="Komatsu T."/>
            <person name="Mizushima-Sugano J."/>
            <person name="Satoh T."/>
            <person name="Shirai Y."/>
            <person name="Takahashi Y."/>
            <person name="Nakagawa K."/>
            <person name="Okumura K."/>
            <person name="Nagase T."/>
            <person name="Nomura N."/>
            <person name="Kikuchi H."/>
            <person name="Masuho Y."/>
            <person name="Yamashita R."/>
            <person name="Nakai K."/>
            <person name="Yada T."/>
            <person name="Nakamura Y."/>
            <person name="Ohara O."/>
            <person name="Isogai T."/>
            <person name="Sugano S."/>
        </authorList>
    </citation>
    <scope>NUCLEOTIDE SEQUENCE [LARGE SCALE MRNA] (ISOFORM 2)</scope>
</reference>
<reference key="3">
    <citation type="journal article" date="2004" name="Nature">
        <title>The DNA sequence and biology of human chromosome 19.</title>
        <authorList>
            <person name="Grimwood J."/>
            <person name="Gordon L.A."/>
            <person name="Olsen A.S."/>
            <person name="Terry A."/>
            <person name="Schmutz J."/>
            <person name="Lamerdin J.E."/>
            <person name="Hellsten U."/>
            <person name="Goodstein D."/>
            <person name="Couronne O."/>
            <person name="Tran-Gyamfi M."/>
            <person name="Aerts A."/>
            <person name="Altherr M."/>
            <person name="Ashworth L."/>
            <person name="Bajorek E."/>
            <person name="Black S."/>
            <person name="Branscomb E."/>
            <person name="Caenepeel S."/>
            <person name="Carrano A.V."/>
            <person name="Caoile C."/>
            <person name="Chan Y.M."/>
            <person name="Christensen M."/>
            <person name="Cleland C.A."/>
            <person name="Copeland A."/>
            <person name="Dalin E."/>
            <person name="Dehal P."/>
            <person name="Denys M."/>
            <person name="Detter J.C."/>
            <person name="Escobar J."/>
            <person name="Flowers D."/>
            <person name="Fotopulos D."/>
            <person name="Garcia C."/>
            <person name="Georgescu A.M."/>
            <person name="Glavina T."/>
            <person name="Gomez M."/>
            <person name="Gonzales E."/>
            <person name="Groza M."/>
            <person name="Hammon N."/>
            <person name="Hawkins T."/>
            <person name="Haydu L."/>
            <person name="Ho I."/>
            <person name="Huang W."/>
            <person name="Israni S."/>
            <person name="Jett J."/>
            <person name="Kadner K."/>
            <person name="Kimball H."/>
            <person name="Kobayashi A."/>
            <person name="Larionov V."/>
            <person name="Leem S.-H."/>
            <person name="Lopez F."/>
            <person name="Lou Y."/>
            <person name="Lowry S."/>
            <person name="Malfatti S."/>
            <person name="Martinez D."/>
            <person name="McCready P.M."/>
            <person name="Medina C."/>
            <person name="Morgan J."/>
            <person name="Nelson K."/>
            <person name="Nolan M."/>
            <person name="Ovcharenko I."/>
            <person name="Pitluck S."/>
            <person name="Pollard M."/>
            <person name="Popkie A.P."/>
            <person name="Predki P."/>
            <person name="Quan G."/>
            <person name="Ramirez L."/>
            <person name="Rash S."/>
            <person name="Retterer J."/>
            <person name="Rodriguez A."/>
            <person name="Rogers S."/>
            <person name="Salamov A."/>
            <person name="Salazar A."/>
            <person name="She X."/>
            <person name="Smith D."/>
            <person name="Slezak T."/>
            <person name="Solovyev V."/>
            <person name="Thayer N."/>
            <person name="Tice H."/>
            <person name="Tsai M."/>
            <person name="Ustaszewska A."/>
            <person name="Vo N."/>
            <person name="Wagner M."/>
            <person name="Wheeler J."/>
            <person name="Wu K."/>
            <person name="Xie G."/>
            <person name="Yang J."/>
            <person name="Dubchak I."/>
            <person name="Furey T.S."/>
            <person name="DeJong P."/>
            <person name="Dickson M."/>
            <person name="Gordon D."/>
            <person name="Eichler E.E."/>
            <person name="Pennacchio L.A."/>
            <person name="Richardson P."/>
            <person name="Stubbs L."/>
            <person name="Rokhsar D.S."/>
            <person name="Myers R.M."/>
            <person name="Rubin E.M."/>
            <person name="Lucas S.M."/>
        </authorList>
    </citation>
    <scope>NUCLEOTIDE SEQUENCE [LARGE SCALE GENOMIC DNA]</scope>
</reference>
<reference key="4">
    <citation type="submission" date="2005-07" db="EMBL/GenBank/DDBJ databases">
        <authorList>
            <person name="Mural R.J."/>
            <person name="Istrail S."/>
            <person name="Sutton G.G."/>
            <person name="Florea L."/>
            <person name="Halpern A.L."/>
            <person name="Mobarry C.M."/>
            <person name="Lippert R."/>
            <person name="Walenz B."/>
            <person name="Shatkay H."/>
            <person name="Dew I."/>
            <person name="Miller J.R."/>
            <person name="Flanigan M.J."/>
            <person name="Edwards N.J."/>
            <person name="Bolanos R."/>
            <person name="Fasulo D."/>
            <person name="Halldorsson B.V."/>
            <person name="Hannenhalli S."/>
            <person name="Turner R."/>
            <person name="Yooseph S."/>
            <person name="Lu F."/>
            <person name="Nusskern D.R."/>
            <person name="Shue B.C."/>
            <person name="Zheng X.H."/>
            <person name="Zhong F."/>
            <person name="Delcher A.L."/>
            <person name="Huson D.H."/>
            <person name="Kravitz S.A."/>
            <person name="Mouchard L."/>
            <person name="Reinert K."/>
            <person name="Remington K.A."/>
            <person name="Clark A.G."/>
            <person name="Waterman M.S."/>
            <person name="Eichler E.E."/>
            <person name="Adams M.D."/>
            <person name="Hunkapiller M.W."/>
            <person name="Myers E.W."/>
            <person name="Venter J.C."/>
        </authorList>
    </citation>
    <scope>NUCLEOTIDE SEQUENCE [LARGE SCALE GENOMIC DNA]</scope>
</reference>
<reference key="5">
    <citation type="journal article" date="2004" name="Genome Res.">
        <title>The status, quality, and expansion of the NIH full-length cDNA project: the Mammalian Gene Collection (MGC).</title>
        <authorList>
            <consortium name="The MGC Project Team"/>
        </authorList>
    </citation>
    <scope>NUCLEOTIDE SEQUENCE [LARGE SCALE MRNA] (ISOFORM 1)</scope>
    <source>
        <tissue>Lung</tissue>
        <tissue>Muscle</tissue>
    </source>
</reference>
<reference key="6">
    <citation type="journal article" date="1998" name="Oncogene">
        <title>The C-terminus of the HTLV-1 Tax oncoprotein mediates interaction with the PDZ domain of cellular proteins.</title>
        <authorList>
            <person name="Rousset R."/>
            <person name="Fabre S."/>
            <person name="Desbois C."/>
            <person name="Bantignies F."/>
            <person name="Jalinot P."/>
        </authorList>
    </citation>
    <scope>NUCLEOTIDE SEQUENCE [MRNA] OF 78-333 (ISOFORM 1/2)</scope>
    <scope>INTERACTION WITH HTLV-I TAX</scope>
</reference>
<reference key="7">
    <citation type="journal article" date="2011" name="BMC Syst. Biol.">
        <title>Initial characterization of the human central proteome.</title>
        <authorList>
            <person name="Burkard T.R."/>
            <person name="Planyavsky M."/>
            <person name="Kaupe I."/>
            <person name="Breitwieser F.P."/>
            <person name="Buerckstuemmer T."/>
            <person name="Bennett K.L."/>
            <person name="Superti-Furga G."/>
            <person name="Colinge J."/>
        </authorList>
    </citation>
    <scope>IDENTIFICATION BY MASS SPECTROMETRY [LARGE SCALE ANALYSIS]</scope>
</reference>
<reference key="8">
    <citation type="journal article" date="2011" name="Sci. Signal.">
        <title>System-wide temporal characterization of the proteome and phosphoproteome of human embryonic stem cell differentiation.</title>
        <authorList>
            <person name="Rigbolt K.T."/>
            <person name="Prokhorova T.A."/>
            <person name="Akimov V."/>
            <person name="Henningsen J."/>
            <person name="Johansen P.T."/>
            <person name="Kratchmarova I."/>
            <person name="Kassem M."/>
            <person name="Mann M."/>
            <person name="Olsen J.V."/>
            <person name="Blagoev B."/>
        </authorList>
    </citation>
    <scope>PHOSPHORYLATION [LARGE SCALE ANALYSIS] AT SER-225 AND SER-232</scope>
    <scope>IDENTIFICATION BY MASS SPECTROMETRY [LARGE SCALE ANALYSIS]</scope>
</reference>
<reference key="9">
    <citation type="journal article" date="2013" name="J. Proteome Res.">
        <title>Toward a comprehensive characterization of a human cancer cell phosphoproteome.</title>
        <authorList>
            <person name="Zhou H."/>
            <person name="Di Palma S."/>
            <person name="Preisinger C."/>
            <person name="Peng M."/>
            <person name="Polat A.N."/>
            <person name="Heck A.J."/>
            <person name="Mohammed S."/>
        </authorList>
    </citation>
    <scope>PHOSPHORYLATION [LARGE SCALE ANALYSIS] AT SER-68; SER-222; SER-225; SER-232; THR-242 AND SER-247</scope>
    <scope>IDENTIFICATION BY MASS SPECTROMETRY [LARGE SCALE ANALYSIS]</scope>
    <source>
        <tissue>Cervix carcinoma</tissue>
        <tissue>Erythroleukemia</tissue>
    </source>
</reference>
<reference key="10">
    <citation type="journal article" date="2014" name="J. Proteomics">
        <title>An enzyme assisted RP-RPLC approach for in-depth analysis of human liver phosphoproteome.</title>
        <authorList>
            <person name="Bian Y."/>
            <person name="Song C."/>
            <person name="Cheng K."/>
            <person name="Dong M."/>
            <person name="Wang F."/>
            <person name="Huang J."/>
            <person name="Sun D."/>
            <person name="Wang L."/>
            <person name="Ye M."/>
            <person name="Zou H."/>
        </authorList>
    </citation>
    <scope>PHOSPHORYLATION [LARGE SCALE ANALYSIS] AT SER-232</scope>
    <scope>IDENTIFICATION BY MASS SPECTROMETRY [LARGE SCALE ANALYSIS]</scope>
    <source>
        <tissue>Liver</tissue>
    </source>
</reference>
<reference key="11">
    <citation type="journal article" date="2020" name="Am. J. Hum. Genet.">
        <title>Expansion of GGC Repeat in GIPC1 Is Associated with Oculopharyngodistal Myopathy.</title>
        <authorList>
            <person name="Deng J."/>
            <person name="Yu J."/>
            <person name="Li P."/>
            <person name="Luan X."/>
            <person name="Cao L."/>
            <person name="Zhao J."/>
            <person name="Yu M."/>
            <person name="Zhang W."/>
            <person name="Lv H."/>
            <person name="Xie Z."/>
            <person name="Meng L."/>
            <person name="Zheng Y."/>
            <person name="Zhao Y."/>
            <person name="Gang Q."/>
            <person name="Wang Q."/>
            <person name="Liu J."/>
            <person name="Zhu M."/>
            <person name="Guo X."/>
            <person name="Su Y."/>
            <person name="Liang Y."/>
            <person name="Liang F."/>
            <person name="Hayashi T."/>
            <person name="Maeda M.H."/>
            <person name="Sato T."/>
            <person name="Ura S."/>
            <person name="Oya Y."/>
            <person name="Ogasawara M."/>
            <person name="Iida A."/>
            <person name="Nishino I."/>
            <person name="Zhou C."/>
            <person name="Yan C."/>
            <person name="Yuan Y."/>
            <person name="Hong D."/>
            <person name="Wang Z."/>
        </authorList>
    </citation>
    <scope>INVOLVEMENT IN OPDM2</scope>
    <scope>SUBCELLULAR LOCATION</scope>
    <scope>TISSUE SPECIFICITY</scope>
</reference>